<evidence type="ECO:0000255" key="1">
    <source>
        <dbReference type="HAMAP-Rule" id="MF_00260"/>
    </source>
</evidence>
<accession>A2SAH5</accession>
<sequence length="329" mass="34409">MNSETLPAELPATLTIASRESRLAMWQAEHVRDALRKLYPACDVKILGMTTRGDQILDRTLSKVGGKGLFVKELESALADGRADLAVHSLKDVPMALPEGFALAAVMSREDPRDAFVSNDYASLDALPAGAVVGTSSLRREAMLRARHPRLDVRPLRGNLDTRLAKLDRGDYAAIILAAAGLKRLGLAARIRALLDVDDSLPAAGQGALGIEIAARRADVAAWLAPLHDHASALAVEAERAVSRALGGSCEVPLAAHAVWRGGELHLTGSVSTTDGARVLAAHAHARAATAADALALGRRVSDALERQGARAIVDALVAASAQAQKGGA</sequence>
<organism>
    <name type="scientific">Burkholderia mallei (strain NCTC 10229)</name>
    <dbReference type="NCBI Taxonomy" id="412022"/>
    <lineage>
        <taxon>Bacteria</taxon>
        <taxon>Pseudomonadati</taxon>
        <taxon>Pseudomonadota</taxon>
        <taxon>Betaproteobacteria</taxon>
        <taxon>Burkholderiales</taxon>
        <taxon>Burkholderiaceae</taxon>
        <taxon>Burkholderia</taxon>
        <taxon>pseudomallei group</taxon>
    </lineage>
</organism>
<comment type="function">
    <text evidence="1">Tetrapolymerization of the monopyrrole PBG into the hydroxymethylbilane pre-uroporphyrinogen in several discrete steps.</text>
</comment>
<comment type="catalytic activity">
    <reaction evidence="1">
        <text>4 porphobilinogen + H2O = hydroxymethylbilane + 4 NH4(+)</text>
        <dbReference type="Rhea" id="RHEA:13185"/>
        <dbReference type="ChEBI" id="CHEBI:15377"/>
        <dbReference type="ChEBI" id="CHEBI:28938"/>
        <dbReference type="ChEBI" id="CHEBI:57845"/>
        <dbReference type="ChEBI" id="CHEBI:58126"/>
        <dbReference type="EC" id="2.5.1.61"/>
    </reaction>
</comment>
<comment type="cofactor">
    <cofactor evidence="1">
        <name>dipyrromethane</name>
        <dbReference type="ChEBI" id="CHEBI:60342"/>
    </cofactor>
    <text evidence="1">Binds 1 dipyrromethane group covalently.</text>
</comment>
<comment type="pathway">
    <text evidence="1">Porphyrin-containing compound metabolism; protoporphyrin-IX biosynthesis; coproporphyrinogen-III from 5-aminolevulinate: step 2/4.</text>
</comment>
<comment type="subunit">
    <text evidence="1">Monomer.</text>
</comment>
<comment type="miscellaneous">
    <text evidence="1">The porphobilinogen subunits are added to the dipyrromethane group.</text>
</comment>
<comment type="similarity">
    <text evidence="1">Belongs to the HMBS family.</text>
</comment>
<proteinExistence type="inferred from homology"/>
<gene>
    <name evidence="1" type="primary">hemC</name>
    <name type="ordered locus">BMA10229_A3000</name>
</gene>
<reference key="1">
    <citation type="journal article" date="2010" name="Genome Biol. Evol.">
        <title>Continuing evolution of Burkholderia mallei through genome reduction and large-scale rearrangements.</title>
        <authorList>
            <person name="Losada L."/>
            <person name="Ronning C.M."/>
            <person name="DeShazer D."/>
            <person name="Woods D."/>
            <person name="Fedorova N."/>
            <person name="Kim H.S."/>
            <person name="Shabalina S.A."/>
            <person name="Pearson T.R."/>
            <person name="Brinkac L."/>
            <person name="Tan P."/>
            <person name="Nandi T."/>
            <person name="Crabtree J."/>
            <person name="Badger J."/>
            <person name="Beckstrom-Sternberg S."/>
            <person name="Saqib M."/>
            <person name="Schutzer S.E."/>
            <person name="Keim P."/>
            <person name="Nierman W.C."/>
        </authorList>
    </citation>
    <scope>NUCLEOTIDE SEQUENCE [LARGE SCALE GENOMIC DNA]</scope>
    <source>
        <strain>NCTC 10229</strain>
    </source>
</reference>
<protein>
    <recommendedName>
        <fullName evidence="1">Porphobilinogen deaminase</fullName>
        <shortName evidence="1">PBG</shortName>
        <ecNumber evidence="1">2.5.1.61</ecNumber>
    </recommendedName>
    <alternativeName>
        <fullName evidence="1">Hydroxymethylbilane synthase</fullName>
        <shortName evidence="1">HMBS</shortName>
    </alternativeName>
    <alternativeName>
        <fullName evidence="1">Pre-uroporphyrinogen synthase</fullName>
    </alternativeName>
</protein>
<feature type="chain" id="PRO_1000047738" description="Porphobilinogen deaminase">
    <location>
        <begin position="1"/>
        <end position="329"/>
    </location>
</feature>
<feature type="modified residue" description="S-(dipyrrolylmethanemethyl)cysteine" evidence="1">
    <location>
        <position position="250"/>
    </location>
</feature>
<name>HEM3_BURM9</name>
<dbReference type="EC" id="2.5.1.61" evidence="1"/>
<dbReference type="EMBL" id="CP000546">
    <property type="protein sequence ID" value="ABN03734.1"/>
    <property type="molecule type" value="Genomic_DNA"/>
</dbReference>
<dbReference type="RefSeq" id="WP_004193185.1">
    <property type="nucleotide sequence ID" value="NC_008836.1"/>
</dbReference>
<dbReference type="SMR" id="A2SAH5"/>
<dbReference type="GeneID" id="93059515"/>
<dbReference type="KEGG" id="bml:BMA10229_A3000"/>
<dbReference type="HOGENOM" id="CLU_019704_0_2_4"/>
<dbReference type="UniPathway" id="UPA00251">
    <property type="reaction ID" value="UER00319"/>
</dbReference>
<dbReference type="Proteomes" id="UP000002283">
    <property type="component" value="Chromosome I"/>
</dbReference>
<dbReference type="GO" id="GO:0005737">
    <property type="term" value="C:cytoplasm"/>
    <property type="evidence" value="ECO:0007669"/>
    <property type="project" value="TreeGrafter"/>
</dbReference>
<dbReference type="GO" id="GO:0004418">
    <property type="term" value="F:hydroxymethylbilane synthase activity"/>
    <property type="evidence" value="ECO:0007669"/>
    <property type="project" value="UniProtKB-UniRule"/>
</dbReference>
<dbReference type="GO" id="GO:0006782">
    <property type="term" value="P:protoporphyrinogen IX biosynthetic process"/>
    <property type="evidence" value="ECO:0007669"/>
    <property type="project" value="UniProtKB-UniRule"/>
</dbReference>
<dbReference type="CDD" id="cd13646">
    <property type="entry name" value="PBP2_EcHMBS_like"/>
    <property type="match status" value="1"/>
</dbReference>
<dbReference type="FunFam" id="3.40.190.10:FF:000004">
    <property type="entry name" value="Porphobilinogen deaminase"/>
    <property type="match status" value="1"/>
</dbReference>
<dbReference type="FunFam" id="3.40.190.10:FF:000005">
    <property type="entry name" value="Porphobilinogen deaminase"/>
    <property type="match status" value="1"/>
</dbReference>
<dbReference type="Gene3D" id="3.40.190.10">
    <property type="entry name" value="Periplasmic binding protein-like II"/>
    <property type="match status" value="2"/>
</dbReference>
<dbReference type="Gene3D" id="3.30.160.40">
    <property type="entry name" value="Porphobilinogen deaminase, C-terminal domain"/>
    <property type="match status" value="1"/>
</dbReference>
<dbReference type="HAMAP" id="MF_00260">
    <property type="entry name" value="Porphobil_deam"/>
    <property type="match status" value="1"/>
</dbReference>
<dbReference type="InterPro" id="IPR000860">
    <property type="entry name" value="HemC"/>
</dbReference>
<dbReference type="InterPro" id="IPR022419">
    <property type="entry name" value="Porphobilin_deaminase_cofac_BS"/>
</dbReference>
<dbReference type="InterPro" id="IPR022417">
    <property type="entry name" value="Porphobilin_deaminase_N"/>
</dbReference>
<dbReference type="InterPro" id="IPR022418">
    <property type="entry name" value="Porphobilinogen_deaminase_C"/>
</dbReference>
<dbReference type="InterPro" id="IPR036803">
    <property type="entry name" value="Porphobilinogen_deaminase_C_sf"/>
</dbReference>
<dbReference type="NCBIfam" id="TIGR00212">
    <property type="entry name" value="hemC"/>
    <property type="match status" value="1"/>
</dbReference>
<dbReference type="PANTHER" id="PTHR11557">
    <property type="entry name" value="PORPHOBILINOGEN DEAMINASE"/>
    <property type="match status" value="1"/>
</dbReference>
<dbReference type="PANTHER" id="PTHR11557:SF0">
    <property type="entry name" value="PORPHOBILINOGEN DEAMINASE"/>
    <property type="match status" value="1"/>
</dbReference>
<dbReference type="Pfam" id="PF01379">
    <property type="entry name" value="Porphobil_deam"/>
    <property type="match status" value="1"/>
</dbReference>
<dbReference type="Pfam" id="PF03900">
    <property type="entry name" value="Porphobil_deamC"/>
    <property type="match status" value="1"/>
</dbReference>
<dbReference type="PIRSF" id="PIRSF001438">
    <property type="entry name" value="4pyrrol_synth_OHMeBilane_synth"/>
    <property type="match status" value="1"/>
</dbReference>
<dbReference type="PRINTS" id="PR00151">
    <property type="entry name" value="PORPHBDMNASE"/>
</dbReference>
<dbReference type="SUPFAM" id="SSF53850">
    <property type="entry name" value="Periplasmic binding protein-like II"/>
    <property type="match status" value="1"/>
</dbReference>
<dbReference type="SUPFAM" id="SSF54782">
    <property type="entry name" value="Porphobilinogen deaminase (hydroxymethylbilane synthase), C-terminal domain"/>
    <property type="match status" value="1"/>
</dbReference>
<dbReference type="PROSITE" id="PS00533">
    <property type="entry name" value="PORPHOBILINOGEN_DEAM"/>
    <property type="match status" value="1"/>
</dbReference>
<keyword id="KW-0627">Porphyrin biosynthesis</keyword>
<keyword id="KW-0808">Transferase</keyword>